<comment type="function">
    <text evidence="1">NDH-1 shuttles electrons from NADH, via FMN and iron-sulfur (Fe-S) centers, to quinones in the respiratory chain. The immediate electron acceptor for the enzyme in this species is believed to be ubiquinone. Couples the redox reaction to proton translocation (for every two electrons transferred, four hydrogen ions are translocated across the cytoplasmic membrane), and thus conserves the redox energy in a proton gradient.</text>
</comment>
<comment type="catalytic activity">
    <reaction evidence="1">
        <text>a quinone + NADH + 5 H(+)(in) = a quinol + NAD(+) + 4 H(+)(out)</text>
        <dbReference type="Rhea" id="RHEA:57888"/>
        <dbReference type="ChEBI" id="CHEBI:15378"/>
        <dbReference type="ChEBI" id="CHEBI:24646"/>
        <dbReference type="ChEBI" id="CHEBI:57540"/>
        <dbReference type="ChEBI" id="CHEBI:57945"/>
        <dbReference type="ChEBI" id="CHEBI:132124"/>
    </reaction>
</comment>
<comment type="subunit">
    <text evidence="1">NDH-1 is composed of 13 different subunits. Subunits NuoA, H, J, K, L, M, N constitute the membrane sector of the complex.</text>
</comment>
<comment type="subcellular location">
    <subcellularLocation>
        <location evidence="1">Cell inner membrane</location>
        <topology evidence="1">Multi-pass membrane protein</topology>
    </subcellularLocation>
</comment>
<comment type="similarity">
    <text evidence="1">Belongs to the complex I subunit 2 family.</text>
</comment>
<proteinExistence type="inferred from homology"/>
<organism>
    <name type="scientific">Yersinia pestis bv. Antiqua (strain Nepal516)</name>
    <dbReference type="NCBI Taxonomy" id="377628"/>
    <lineage>
        <taxon>Bacteria</taxon>
        <taxon>Pseudomonadati</taxon>
        <taxon>Pseudomonadota</taxon>
        <taxon>Gammaproteobacteria</taxon>
        <taxon>Enterobacterales</taxon>
        <taxon>Yersiniaceae</taxon>
        <taxon>Yersinia</taxon>
    </lineage>
</organism>
<reference key="1">
    <citation type="journal article" date="2006" name="J. Bacteriol.">
        <title>Complete genome sequence of Yersinia pestis strains Antiqua and Nepal516: evidence of gene reduction in an emerging pathogen.</title>
        <authorList>
            <person name="Chain P.S.G."/>
            <person name="Hu P."/>
            <person name="Malfatti S.A."/>
            <person name="Radnedge L."/>
            <person name="Larimer F."/>
            <person name="Vergez L.M."/>
            <person name="Worsham P."/>
            <person name="Chu M.C."/>
            <person name="Andersen G.L."/>
        </authorList>
    </citation>
    <scope>NUCLEOTIDE SEQUENCE [LARGE SCALE GENOMIC DNA]</scope>
    <source>
        <strain>Nepal516</strain>
    </source>
</reference>
<reference key="2">
    <citation type="submission" date="2009-04" db="EMBL/GenBank/DDBJ databases">
        <title>Yersinia pestis Nepal516A whole genome shotgun sequencing project.</title>
        <authorList>
            <person name="Plunkett G. III"/>
            <person name="Anderson B.D."/>
            <person name="Baumler D.J."/>
            <person name="Burland V."/>
            <person name="Cabot E.L."/>
            <person name="Glasner J.D."/>
            <person name="Mau B."/>
            <person name="Neeno-Eckwall E."/>
            <person name="Perna N.T."/>
            <person name="Munk A.C."/>
            <person name="Tapia R."/>
            <person name="Green L.D."/>
            <person name="Rogers Y.C."/>
            <person name="Detter J.C."/>
            <person name="Bruce D.C."/>
            <person name="Brettin T.S."/>
        </authorList>
    </citation>
    <scope>NUCLEOTIDE SEQUENCE [LARGE SCALE GENOMIC DNA]</scope>
    <source>
        <strain>Nepal516</strain>
    </source>
</reference>
<name>NUON_YERPN</name>
<keyword id="KW-0997">Cell inner membrane</keyword>
<keyword id="KW-1003">Cell membrane</keyword>
<keyword id="KW-0472">Membrane</keyword>
<keyword id="KW-0520">NAD</keyword>
<keyword id="KW-0874">Quinone</keyword>
<keyword id="KW-1278">Translocase</keyword>
<keyword id="KW-0812">Transmembrane</keyword>
<keyword id="KW-1133">Transmembrane helix</keyword>
<keyword id="KW-0813">Transport</keyword>
<keyword id="KW-0830">Ubiquinone</keyword>
<protein>
    <recommendedName>
        <fullName evidence="1">NADH-quinone oxidoreductase subunit N</fullName>
        <ecNumber evidence="1">7.1.1.-</ecNumber>
    </recommendedName>
    <alternativeName>
        <fullName evidence="1">NADH dehydrogenase I subunit N</fullName>
    </alternativeName>
    <alternativeName>
        <fullName evidence="1">NDH-1 subunit N</fullName>
    </alternativeName>
</protein>
<sequence>MTITPQQLIAMLPLLIVGLTVVVVMLSIAWRRDHFINATLTVIGLNLALLSLYFVGQVGPMDVTPLMRVDGYSMFYTGLVIIASLATSTFAYPWLVGYPDNREEFYLLVLIAALGGILLASANHLASLFLGIELLTLPLFGLIGYAYRQKRSLEASIKYMLLSAAASSFLLFGMALLYAESGSLSFVGLGQSLSDSMVHQPLILAGLGMMIVGLGFKLSLVPFQLWTPDVYQGAPAPVSTFLATASKIAIFAVVMRLFMYAPAADSEAVRLVLSIIAVASILFGNLMAISQTNIKRLLGYSSIAHLGYLLIALVAVQTHELALPLETIGVYLAGYLFSSLGAFGVVSLMSSPYKGPDAESLFSYRGLFWHKPILSAVMTVMMLSLAGIPMTLGFIGKFFVVAMGVSANLWWLTGAVVLGSAIGLYYYLRVTVSLFLSPPQSLVRDTPSNWALTAGGVVVLISAILVLVLGIYPQPLITLVQMAQPLM</sequence>
<gene>
    <name evidence="1" type="primary">nuoN</name>
    <name type="ordered locus">YPN_2138</name>
    <name type="ORF">YP516_2387</name>
</gene>
<accession>Q1CHR3</accession>
<accession>C4GV62</accession>
<dbReference type="EC" id="7.1.1.-" evidence="1"/>
<dbReference type="EMBL" id="CP000305">
    <property type="protein sequence ID" value="ABG18467.1"/>
    <property type="molecule type" value="Genomic_DNA"/>
</dbReference>
<dbReference type="EMBL" id="ACNQ01000013">
    <property type="protein sequence ID" value="EEO76190.1"/>
    <property type="molecule type" value="Genomic_DNA"/>
</dbReference>
<dbReference type="RefSeq" id="WP_002210268.1">
    <property type="nucleotide sequence ID" value="NZ_ACNQ01000013.1"/>
</dbReference>
<dbReference type="SMR" id="Q1CHR3"/>
<dbReference type="GeneID" id="57976146"/>
<dbReference type="KEGG" id="ypn:YPN_2138"/>
<dbReference type="HOGENOM" id="CLU_007100_1_5_6"/>
<dbReference type="Proteomes" id="UP000008936">
    <property type="component" value="Chromosome"/>
</dbReference>
<dbReference type="GO" id="GO:0005886">
    <property type="term" value="C:plasma membrane"/>
    <property type="evidence" value="ECO:0007669"/>
    <property type="project" value="UniProtKB-SubCell"/>
</dbReference>
<dbReference type="GO" id="GO:0008137">
    <property type="term" value="F:NADH dehydrogenase (ubiquinone) activity"/>
    <property type="evidence" value="ECO:0007669"/>
    <property type="project" value="InterPro"/>
</dbReference>
<dbReference type="GO" id="GO:0050136">
    <property type="term" value="F:NADH:ubiquinone reductase (non-electrogenic) activity"/>
    <property type="evidence" value="ECO:0007669"/>
    <property type="project" value="UniProtKB-UniRule"/>
</dbReference>
<dbReference type="GO" id="GO:0048038">
    <property type="term" value="F:quinone binding"/>
    <property type="evidence" value="ECO:0007669"/>
    <property type="project" value="UniProtKB-KW"/>
</dbReference>
<dbReference type="GO" id="GO:0042773">
    <property type="term" value="P:ATP synthesis coupled electron transport"/>
    <property type="evidence" value="ECO:0007669"/>
    <property type="project" value="InterPro"/>
</dbReference>
<dbReference type="HAMAP" id="MF_00445">
    <property type="entry name" value="NDH1_NuoN_1"/>
    <property type="match status" value="1"/>
</dbReference>
<dbReference type="InterPro" id="IPR010096">
    <property type="entry name" value="NADH-Q_OxRdtase_suN/2"/>
</dbReference>
<dbReference type="InterPro" id="IPR001750">
    <property type="entry name" value="ND/Mrp_TM"/>
</dbReference>
<dbReference type="NCBIfam" id="TIGR01770">
    <property type="entry name" value="NDH_I_N"/>
    <property type="match status" value="1"/>
</dbReference>
<dbReference type="NCBIfam" id="NF004439">
    <property type="entry name" value="PRK05777.1-1"/>
    <property type="match status" value="1"/>
</dbReference>
<dbReference type="PANTHER" id="PTHR22773">
    <property type="entry name" value="NADH DEHYDROGENASE"/>
    <property type="match status" value="1"/>
</dbReference>
<dbReference type="Pfam" id="PF00361">
    <property type="entry name" value="Proton_antipo_M"/>
    <property type="match status" value="1"/>
</dbReference>
<feature type="chain" id="PRO_1000017382" description="NADH-quinone oxidoreductase subunit N">
    <location>
        <begin position="1"/>
        <end position="487"/>
    </location>
</feature>
<feature type="transmembrane region" description="Helical" evidence="1">
    <location>
        <begin position="8"/>
        <end position="28"/>
    </location>
</feature>
<feature type="transmembrane region" description="Helical" evidence="1">
    <location>
        <begin position="35"/>
        <end position="55"/>
    </location>
</feature>
<feature type="transmembrane region" description="Helical" evidence="1">
    <location>
        <begin position="78"/>
        <end position="98"/>
    </location>
</feature>
<feature type="transmembrane region" description="Helical" evidence="1">
    <location>
        <begin position="104"/>
        <end position="124"/>
    </location>
</feature>
<feature type="transmembrane region" description="Helical" evidence="1">
    <location>
        <begin position="125"/>
        <end position="145"/>
    </location>
</feature>
<feature type="transmembrane region" description="Helical" evidence="1">
    <location>
        <begin position="159"/>
        <end position="179"/>
    </location>
</feature>
<feature type="transmembrane region" description="Helical" evidence="1">
    <location>
        <begin position="203"/>
        <end position="223"/>
    </location>
</feature>
<feature type="transmembrane region" description="Helical" evidence="1">
    <location>
        <begin position="235"/>
        <end position="255"/>
    </location>
</feature>
<feature type="transmembrane region" description="Helical" evidence="1">
    <location>
        <begin position="271"/>
        <end position="291"/>
    </location>
</feature>
<feature type="transmembrane region" description="Helical" evidence="1">
    <location>
        <begin position="297"/>
        <end position="317"/>
    </location>
</feature>
<feature type="transmembrane region" description="Helical" evidence="1">
    <location>
        <begin position="328"/>
        <end position="348"/>
    </location>
</feature>
<feature type="transmembrane region" description="Helical" evidence="1">
    <location>
        <begin position="376"/>
        <end position="396"/>
    </location>
</feature>
<feature type="transmembrane region" description="Helical" evidence="1">
    <location>
        <begin position="409"/>
        <end position="428"/>
    </location>
</feature>
<feature type="transmembrane region" description="Helical" evidence="1">
    <location>
        <begin position="451"/>
        <end position="471"/>
    </location>
</feature>
<evidence type="ECO:0000255" key="1">
    <source>
        <dbReference type="HAMAP-Rule" id="MF_00445"/>
    </source>
</evidence>